<gene>
    <name type="primary">Dnajc15</name>
    <name type="synonym">Dnajd1</name>
</gene>
<keyword id="KW-0143">Chaperone</keyword>
<keyword id="KW-0472">Membrane</keyword>
<keyword id="KW-0496">Mitochondrion</keyword>
<keyword id="KW-0999">Mitochondrion inner membrane</keyword>
<keyword id="KW-0597">Phosphoprotein</keyword>
<keyword id="KW-0653">Protein transport</keyword>
<keyword id="KW-1185">Reference proteome</keyword>
<keyword id="KW-0811">Translocation</keyword>
<keyword id="KW-0812">Transmembrane</keyword>
<keyword id="KW-1133">Transmembrane helix</keyword>
<keyword id="KW-0813">Transport</keyword>
<evidence type="ECO:0000250" key="1"/>
<evidence type="ECO:0000250" key="2">
    <source>
        <dbReference type="UniProtKB" id="Q9Y5T4"/>
    </source>
</evidence>
<evidence type="ECO:0000255" key="3"/>
<evidence type="ECO:0000255" key="4">
    <source>
        <dbReference type="PROSITE-ProRule" id="PRU00286"/>
    </source>
</evidence>
<evidence type="ECO:0000269" key="5">
    <source>
    </source>
</evidence>
<comment type="function">
    <text evidence="1 5">Acts as an import component of the TIM23 translocase complex. Stimulates the ATPase activity of HSPA9 (By similarity). Negative regulator of the mitochondrial respiratory chain. Prevents mitochondrial hyperpolarization state and restricts mitochondrial generation of ATP.</text>
</comment>
<comment type="subunit">
    <text evidence="1">Interacts with the TIM23 complex. Directly interacts with PAM16/MAGMAS; this interaction counteracts DNAJC15-dependent stimulation of HSPA9 ATPase activity (By similarity). Associates with complex I of the mitochondrial electron transfer chain; this interaction may interfere with the formation of supercomplexes that facilitate the transfer of electrons between complexes.</text>
</comment>
<comment type="subcellular location">
    <subcellularLocation>
        <location evidence="5">Mitochondrion inner membrane</location>
        <topology evidence="5">Single-pass membrane protein</topology>
    </subcellularLocation>
</comment>
<comment type="tissue specificity">
    <text evidence="5">Expressed at high levels in liver, heart, at moderate levels in kidney and, at very low levels, in lung (at protein level). High expression levels in testis. Highly expressed in CD8+ T-cells, but barely detectable in CD4+ T-cells (at protein level). Almost undetectable in B-cells.</text>
</comment>
<comment type="disruption phenotype">
    <text evidence="5">No visible phenotype. Mutant animals are viable. Both male and female are fertile and do not exhibit any obvious malformations or behavioral abnormalities. CD8+ T-cell mitochondria are hyperpolarized, compared to their wild-type counterparts. In fasted mutant animals, livers do not exhibit any signs of steatosis, but accumulate glycogen, possibly due to a sustained mitochondrial oxidation that leads to rapid metabolism of lipids, hence minimizing their accumulation in the liver and favoring glycogenesis. During fasting, loss of white fat is also more prominent than in wild type animals.</text>
</comment>
<organism>
    <name type="scientific">Mus musculus</name>
    <name type="common">Mouse</name>
    <dbReference type="NCBI Taxonomy" id="10090"/>
    <lineage>
        <taxon>Eukaryota</taxon>
        <taxon>Metazoa</taxon>
        <taxon>Chordata</taxon>
        <taxon>Craniata</taxon>
        <taxon>Vertebrata</taxon>
        <taxon>Euteleostomi</taxon>
        <taxon>Mammalia</taxon>
        <taxon>Eutheria</taxon>
        <taxon>Euarchontoglires</taxon>
        <taxon>Glires</taxon>
        <taxon>Rodentia</taxon>
        <taxon>Myomorpha</taxon>
        <taxon>Muroidea</taxon>
        <taxon>Muridae</taxon>
        <taxon>Murinae</taxon>
        <taxon>Mus</taxon>
        <taxon>Mus</taxon>
    </lineage>
</organism>
<proteinExistence type="evidence at protein level"/>
<dbReference type="EMBL" id="AK002598">
    <property type="protein sequence ID" value="BAB22219.1"/>
    <property type="molecule type" value="mRNA"/>
</dbReference>
<dbReference type="EMBL" id="BC027509">
    <property type="protein sequence ID" value="AAH27509.1"/>
    <property type="molecule type" value="mRNA"/>
</dbReference>
<dbReference type="CCDS" id="CCDS27292.1"/>
<dbReference type="RefSeq" id="NP_079660.1">
    <property type="nucleotide sequence ID" value="NM_025384.3"/>
</dbReference>
<dbReference type="SMR" id="Q78YY6"/>
<dbReference type="FunCoup" id="Q78YY6">
    <property type="interactions" value="522"/>
</dbReference>
<dbReference type="STRING" id="10090.ENSMUSP00000154390"/>
<dbReference type="iPTMnet" id="Q78YY6"/>
<dbReference type="PhosphoSitePlus" id="Q78YY6"/>
<dbReference type="PaxDb" id="10090-ENSMUSP00000022590"/>
<dbReference type="PeptideAtlas" id="Q78YY6"/>
<dbReference type="ProteomicsDB" id="277459"/>
<dbReference type="Pumba" id="Q78YY6"/>
<dbReference type="Antibodypedia" id="2384">
    <property type="antibodies" value="59 antibodies from 24 providers"/>
</dbReference>
<dbReference type="DNASU" id="66148"/>
<dbReference type="Ensembl" id="ENSMUST00000226459.2">
    <property type="protein sequence ID" value="ENSMUSP00000154390.2"/>
    <property type="gene ID" value="ENSMUSG00000022013.5"/>
</dbReference>
<dbReference type="GeneID" id="66148"/>
<dbReference type="KEGG" id="mmu:66148"/>
<dbReference type="UCSC" id="uc007usc.1">
    <property type="organism name" value="mouse"/>
</dbReference>
<dbReference type="AGR" id="MGI:1913398"/>
<dbReference type="CTD" id="29103"/>
<dbReference type="MGI" id="MGI:1913398">
    <property type="gene designation" value="Dnajc15"/>
</dbReference>
<dbReference type="VEuPathDB" id="HostDB:ENSMUSG00000022013"/>
<dbReference type="eggNOG" id="KOG0723">
    <property type="taxonomic scope" value="Eukaryota"/>
</dbReference>
<dbReference type="GeneTree" id="ENSGT00940000159907"/>
<dbReference type="HOGENOM" id="CLU_017633_13_3_1"/>
<dbReference type="InParanoid" id="Q78YY6"/>
<dbReference type="OMA" id="MRYAEYT"/>
<dbReference type="OrthoDB" id="240298at2759"/>
<dbReference type="PhylomeDB" id="Q78YY6"/>
<dbReference type="TreeFam" id="TF320584"/>
<dbReference type="BioGRID-ORCS" id="66148">
    <property type="hits" value="2 hits in 76 CRISPR screens"/>
</dbReference>
<dbReference type="ChiTaRS" id="Dnajc15">
    <property type="organism name" value="mouse"/>
</dbReference>
<dbReference type="PRO" id="PR:Q78YY6"/>
<dbReference type="Proteomes" id="UP000000589">
    <property type="component" value="Chromosome 14"/>
</dbReference>
<dbReference type="RNAct" id="Q78YY6">
    <property type="molecule type" value="protein"/>
</dbReference>
<dbReference type="Bgee" id="ENSMUSG00000022013">
    <property type="expression patterns" value="Expressed in seminiferous tubule of testis and 270 other cell types or tissues"/>
</dbReference>
<dbReference type="ExpressionAtlas" id="Q78YY6">
    <property type="expression patterns" value="baseline and differential"/>
</dbReference>
<dbReference type="GO" id="GO:0005743">
    <property type="term" value="C:mitochondrial inner membrane"/>
    <property type="evidence" value="ECO:0000314"/>
    <property type="project" value="MGI"/>
</dbReference>
<dbReference type="GO" id="GO:0005739">
    <property type="term" value="C:mitochondrion"/>
    <property type="evidence" value="ECO:0000314"/>
    <property type="project" value="MGI"/>
</dbReference>
<dbReference type="GO" id="GO:0009267">
    <property type="term" value="P:cellular response to starvation"/>
    <property type="evidence" value="ECO:0000315"/>
    <property type="project" value="MGI"/>
</dbReference>
<dbReference type="GO" id="GO:0006120">
    <property type="term" value="P:mitochondrial electron transport, NADH to ubiquinone"/>
    <property type="evidence" value="ECO:0000315"/>
    <property type="project" value="MGI"/>
</dbReference>
<dbReference type="GO" id="GO:1902957">
    <property type="term" value="P:negative regulation of mitochondrial electron transport, NADH to ubiquinone"/>
    <property type="evidence" value="ECO:0000315"/>
    <property type="project" value="MGI"/>
</dbReference>
<dbReference type="GO" id="GO:0031333">
    <property type="term" value="P:negative regulation of protein-containing complex assembly"/>
    <property type="evidence" value="ECO:0000315"/>
    <property type="project" value="MGI"/>
</dbReference>
<dbReference type="GO" id="GO:0015031">
    <property type="term" value="P:protein transport"/>
    <property type="evidence" value="ECO:0007669"/>
    <property type="project" value="UniProtKB-KW"/>
</dbReference>
<dbReference type="GO" id="GO:0065003">
    <property type="term" value="P:protein-containing complex assembly"/>
    <property type="evidence" value="ECO:0000315"/>
    <property type="project" value="MGI"/>
</dbReference>
<dbReference type="GO" id="GO:0019216">
    <property type="term" value="P:regulation of lipid metabolic process"/>
    <property type="evidence" value="ECO:0000315"/>
    <property type="project" value="MGI"/>
</dbReference>
<dbReference type="CDD" id="cd06257">
    <property type="entry name" value="DnaJ"/>
    <property type="match status" value="1"/>
</dbReference>
<dbReference type="FunFam" id="1.10.287.110:FF:000001">
    <property type="entry name" value="Import inner membrane translocase subunit tim14"/>
    <property type="match status" value="1"/>
</dbReference>
<dbReference type="Gene3D" id="1.10.287.110">
    <property type="entry name" value="DnaJ domain"/>
    <property type="match status" value="1"/>
</dbReference>
<dbReference type="InterPro" id="IPR001623">
    <property type="entry name" value="DnaJ_domain"/>
</dbReference>
<dbReference type="InterPro" id="IPR036869">
    <property type="entry name" value="J_dom_sf"/>
</dbReference>
<dbReference type="PANTHER" id="PTHR12763">
    <property type="match status" value="1"/>
</dbReference>
<dbReference type="PANTHER" id="PTHR12763:SF7">
    <property type="entry name" value="DNAJ HOMOLOG SUBFAMILY C MEMBER 15"/>
    <property type="match status" value="1"/>
</dbReference>
<dbReference type="SMART" id="SM00271">
    <property type="entry name" value="DnaJ"/>
    <property type="match status" value="1"/>
</dbReference>
<dbReference type="SUPFAM" id="SSF46565">
    <property type="entry name" value="Chaperone J-domain"/>
    <property type="match status" value="1"/>
</dbReference>
<dbReference type="PROSITE" id="PS50076">
    <property type="entry name" value="DNAJ_2"/>
    <property type="match status" value="1"/>
</dbReference>
<feature type="chain" id="PRO_0000247140" description="DnaJ homolog subfamily C member 15">
    <location>
        <begin position="1"/>
        <end position="149"/>
    </location>
</feature>
<feature type="topological domain" description="Mitochondrial intermembrane" evidence="3">
    <location>
        <begin position="1"/>
        <end position="37"/>
    </location>
</feature>
<feature type="transmembrane region" description="Helical" evidence="3">
    <location>
        <begin position="38"/>
        <end position="54"/>
    </location>
</feature>
<feature type="topological domain" description="Mitochondrial matrix" evidence="3">
    <location>
        <begin position="55"/>
        <end position="149"/>
    </location>
</feature>
<feature type="domain" description="J" evidence="4">
    <location>
        <begin position="94"/>
        <end position="149"/>
    </location>
</feature>
<feature type="modified residue" description="Phosphoserine" evidence="2">
    <location>
        <position position="102"/>
    </location>
</feature>
<name>DJC15_MOUSE</name>
<reference key="1">
    <citation type="journal article" date="2005" name="Science">
        <title>The transcriptional landscape of the mammalian genome.</title>
        <authorList>
            <person name="Carninci P."/>
            <person name="Kasukawa T."/>
            <person name="Katayama S."/>
            <person name="Gough J."/>
            <person name="Frith M.C."/>
            <person name="Maeda N."/>
            <person name="Oyama R."/>
            <person name="Ravasi T."/>
            <person name="Lenhard B."/>
            <person name="Wells C."/>
            <person name="Kodzius R."/>
            <person name="Shimokawa K."/>
            <person name="Bajic V.B."/>
            <person name="Brenner S.E."/>
            <person name="Batalov S."/>
            <person name="Forrest A.R."/>
            <person name="Zavolan M."/>
            <person name="Davis M.J."/>
            <person name="Wilming L.G."/>
            <person name="Aidinis V."/>
            <person name="Allen J.E."/>
            <person name="Ambesi-Impiombato A."/>
            <person name="Apweiler R."/>
            <person name="Aturaliya R.N."/>
            <person name="Bailey T.L."/>
            <person name="Bansal M."/>
            <person name="Baxter L."/>
            <person name="Beisel K.W."/>
            <person name="Bersano T."/>
            <person name="Bono H."/>
            <person name="Chalk A.M."/>
            <person name="Chiu K.P."/>
            <person name="Choudhary V."/>
            <person name="Christoffels A."/>
            <person name="Clutterbuck D.R."/>
            <person name="Crowe M.L."/>
            <person name="Dalla E."/>
            <person name="Dalrymple B.P."/>
            <person name="de Bono B."/>
            <person name="Della Gatta G."/>
            <person name="di Bernardo D."/>
            <person name="Down T."/>
            <person name="Engstrom P."/>
            <person name="Fagiolini M."/>
            <person name="Faulkner G."/>
            <person name="Fletcher C.F."/>
            <person name="Fukushima T."/>
            <person name="Furuno M."/>
            <person name="Futaki S."/>
            <person name="Gariboldi M."/>
            <person name="Georgii-Hemming P."/>
            <person name="Gingeras T.R."/>
            <person name="Gojobori T."/>
            <person name="Green R.E."/>
            <person name="Gustincich S."/>
            <person name="Harbers M."/>
            <person name="Hayashi Y."/>
            <person name="Hensch T.K."/>
            <person name="Hirokawa N."/>
            <person name="Hill D."/>
            <person name="Huminiecki L."/>
            <person name="Iacono M."/>
            <person name="Ikeo K."/>
            <person name="Iwama A."/>
            <person name="Ishikawa T."/>
            <person name="Jakt M."/>
            <person name="Kanapin A."/>
            <person name="Katoh M."/>
            <person name="Kawasawa Y."/>
            <person name="Kelso J."/>
            <person name="Kitamura H."/>
            <person name="Kitano H."/>
            <person name="Kollias G."/>
            <person name="Krishnan S.P."/>
            <person name="Kruger A."/>
            <person name="Kummerfeld S.K."/>
            <person name="Kurochkin I.V."/>
            <person name="Lareau L.F."/>
            <person name="Lazarevic D."/>
            <person name="Lipovich L."/>
            <person name="Liu J."/>
            <person name="Liuni S."/>
            <person name="McWilliam S."/>
            <person name="Madan Babu M."/>
            <person name="Madera M."/>
            <person name="Marchionni L."/>
            <person name="Matsuda H."/>
            <person name="Matsuzawa S."/>
            <person name="Miki H."/>
            <person name="Mignone F."/>
            <person name="Miyake S."/>
            <person name="Morris K."/>
            <person name="Mottagui-Tabar S."/>
            <person name="Mulder N."/>
            <person name="Nakano N."/>
            <person name="Nakauchi H."/>
            <person name="Ng P."/>
            <person name="Nilsson R."/>
            <person name="Nishiguchi S."/>
            <person name="Nishikawa S."/>
            <person name="Nori F."/>
            <person name="Ohara O."/>
            <person name="Okazaki Y."/>
            <person name="Orlando V."/>
            <person name="Pang K.C."/>
            <person name="Pavan W.J."/>
            <person name="Pavesi G."/>
            <person name="Pesole G."/>
            <person name="Petrovsky N."/>
            <person name="Piazza S."/>
            <person name="Reed J."/>
            <person name="Reid J.F."/>
            <person name="Ring B.Z."/>
            <person name="Ringwald M."/>
            <person name="Rost B."/>
            <person name="Ruan Y."/>
            <person name="Salzberg S.L."/>
            <person name="Sandelin A."/>
            <person name="Schneider C."/>
            <person name="Schoenbach C."/>
            <person name="Sekiguchi K."/>
            <person name="Semple C.A."/>
            <person name="Seno S."/>
            <person name="Sessa L."/>
            <person name="Sheng Y."/>
            <person name="Shibata Y."/>
            <person name="Shimada H."/>
            <person name="Shimada K."/>
            <person name="Silva D."/>
            <person name="Sinclair B."/>
            <person name="Sperling S."/>
            <person name="Stupka E."/>
            <person name="Sugiura K."/>
            <person name="Sultana R."/>
            <person name="Takenaka Y."/>
            <person name="Taki K."/>
            <person name="Tammoja K."/>
            <person name="Tan S.L."/>
            <person name="Tang S."/>
            <person name="Taylor M.S."/>
            <person name="Tegner J."/>
            <person name="Teichmann S.A."/>
            <person name="Ueda H.R."/>
            <person name="van Nimwegen E."/>
            <person name="Verardo R."/>
            <person name="Wei C.L."/>
            <person name="Yagi K."/>
            <person name="Yamanishi H."/>
            <person name="Zabarovsky E."/>
            <person name="Zhu S."/>
            <person name="Zimmer A."/>
            <person name="Hide W."/>
            <person name="Bult C."/>
            <person name="Grimmond S.M."/>
            <person name="Teasdale R.D."/>
            <person name="Liu E.T."/>
            <person name="Brusic V."/>
            <person name="Quackenbush J."/>
            <person name="Wahlestedt C."/>
            <person name="Mattick J.S."/>
            <person name="Hume D.A."/>
            <person name="Kai C."/>
            <person name="Sasaki D."/>
            <person name="Tomaru Y."/>
            <person name="Fukuda S."/>
            <person name="Kanamori-Katayama M."/>
            <person name="Suzuki M."/>
            <person name="Aoki J."/>
            <person name="Arakawa T."/>
            <person name="Iida J."/>
            <person name="Imamura K."/>
            <person name="Itoh M."/>
            <person name="Kato T."/>
            <person name="Kawaji H."/>
            <person name="Kawagashira N."/>
            <person name="Kawashima T."/>
            <person name="Kojima M."/>
            <person name="Kondo S."/>
            <person name="Konno H."/>
            <person name="Nakano K."/>
            <person name="Ninomiya N."/>
            <person name="Nishio T."/>
            <person name="Okada M."/>
            <person name="Plessy C."/>
            <person name="Shibata K."/>
            <person name="Shiraki T."/>
            <person name="Suzuki S."/>
            <person name="Tagami M."/>
            <person name="Waki K."/>
            <person name="Watahiki A."/>
            <person name="Okamura-Oho Y."/>
            <person name="Suzuki H."/>
            <person name="Kawai J."/>
            <person name="Hayashizaki Y."/>
        </authorList>
    </citation>
    <scope>NUCLEOTIDE SEQUENCE [LARGE SCALE MRNA]</scope>
    <source>
        <strain>C57BL/6J</strain>
        <tissue>Kidney</tissue>
    </source>
</reference>
<reference key="2">
    <citation type="journal article" date="2004" name="Genome Res.">
        <title>The status, quality, and expansion of the NIH full-length cDNA project: the Mammalian Gene Collection (MGC).</title>
        <authorList>
            <consortium name="The MGC Project Team"/>
        </authorList>
    </citation>
    <scope>NUCLEOTIDE SEQUENCE [LARGE SCALE MRNA]</scope>
    <source>
        <strain>C57BL/6J</strain>
        <tissue>Mammary gland</tissue>
    </source>
</reference>
<reference key="3">
    <citation type="journal article" date="2010" name="Cell">
        <title>A tissue-specific atlas of mouse protein phosphorylation and expression.</title>
        <authorList>
            <person name="Huttlin E.L."/>
            <person name="Jedrychowski M.P."/>
            <person name="Elias J.E."/>
            <person name="Goswami T."/>
            <person name="Rad R."/>
            <person name="Beausoleil S.A."/>
            <person name="Villen J."/>
            <person name="Haas W."/>
            <person name="Sowa M.E."/>
            <person name="Gygi S.P."/>
        </authorList>
    </citation>
    <scope>IDENTIFICATION BY MASS SPECTROMETRY [LARGE SCALE ANALYSIS]</scope>
    <source>
        <tissue>Brain</tissue>
        <tissue>Brown adipose tissue</tissue>
        <tissue>Testis</tissue>
    </source>
</reference>
<reference key="4">
    <citation type="journal article" date="2013" name="Mol. Cell. Biol.">
        <title>MCJ/DnaJC15, an endogenous mitochondrial repressor of the respiratory chain that controls metabolic alterations.</title>
        <authorList>
            <person name="Hatle K.M."/>
            <person name="Gummadidala P."/>
            <person name="Navasa N."/>
            <person name="Bernardo E."/>
            <person name="Dodge J."/>
            <person name="Silverstrim B."/>
            <person name="Fortner K."/>
            <person name="Burg E."/>
            <person name="Suratt B.T."/>
            <person name="Hammer J."/>
            <person name="Radermacher M."/>
            <person name="Taatjes D.J."/>
            <person name="Thornton T."/>
            <person name="Anguita J."/>
            <person name="Rincon M."/>
        </authorList>
    </citation>
    <scope>FUNCTION</scope>
    <scope>ASSOCIATION WITH MITOCHONDRIAL COMPLEX I</scope>
    <scope>SUBCELLULAR LOCATION</scope>
    <scope>TISSUE SPECIFICITY</scope>
    <scope>DISRUPTION PHENOTYPE</scope>
</reference>
<accession>Q78YY6</accession>
<sequence>MATGGGVTSREGLRYAEYLPPSAQRSDADIDHTAGRRLLAVGLGVAAVAFAGRYAFQIWKPLEQVITATARKISSPSFSSYYKGGFEQKMSKREASLILGVSPSAGKAKIRTAHKRIMILNHPDKGGSPYLASKINEAKDLLEASSKAN</sequence>
<protein>
    <recommendedName>
        <fullName>DnaJ homolog subfamily C member 15</fullName>
    </recommendedName>
</protein>